<organism>
    <name type="scientific">Nitrosococcus oceani (strain ATCC 19707 / BCRC 17464 / JCM 30415 / NCIMB 11848 / C-107)</name>
    <dbReference type="NCBI Taxonomy" id="323261"/>
    <lineage>
        <taxon>Bacteria</taxon>
        <taxon>Pseudomonadati</taxon>
        <taxon>Pseudomonadota</taxon>
        <taxon>Gammaproteobacteria</taxon>
        <taxon>Chromatiales</taxon>
        <taxon>Chromatiaceae</taxon>
        <taxon>Nitrosococcus</taxon>
    </lineage>
</organism>
<proteinExistence type="inferred from homology"/>
<comment type="function">
    <text evidence="1">Catalyzes the methyl esterification of L-isoaspartyl residues in peptides and proteins that result from spontaneous decomposition of normal L-aspartyl and L-asparaginyl residues. It plays a role in the repair and/or degradation of damaged proteins.</text>
</comment>
<comment type="catalytic activity">
    <reaction evidence="1">
        <text>[protein]-L-isoaspartate + S-adenosyl-L-methionine = [protein]-L-isoaspartate alpha-methyl ester + S-adenosyl-L-homocysteine</text>
        <dbReference type="Rhea" id="RHEA:12705"/>
        <dbReference type="Rhea" id="RHEA-COMP:12143"/>
        <dbReference type="Rhea" id="RHEA-COMP:12144"/>
        <dbReference type="ChEBI" id="CHEBI:57856"/>
        <dbReference type="ChEBI" id="CHEBI:59789"/>
        <dbReference type="ChEBI" id="CHEBI:90596"/>
        <dbReference type="ChEBI" id="CHEBI:90598"/>
        <dbReference type="EC" id="2.1.1.77"/>
    </reaction>
</comment>
<comment type="subcellular location">
    <subcellularLocation>
        <location evidence="1">Cytoplasm</location>
    </subcellularLocation>
</comment>
<comment type="similarity">
    <text evidence="1">Belongs to the methyltransferase superfamily. L-isoaspartyl/D-aspartyl protein methyltransferase family.</text>
</comment>
<gene>
    <name evidence="1" type="primary">pcm1</name>
    <name type="ordered locus">Noc_0790</name>
</gene>
<keyword id="KW-0963">Cytoplasm</keyword>
<keyword id="KW-0489">Methyltransferase</keyword>
<keyword id="KW-1185">Reference proteome</keyword>
<keyword id="KW-0949">S-adenosyl-L-methionine</keyword>
<keyword id="KW-0808">Transferase</keyword>
<accession>Q3JCZ3</accession>
<evidence type="ECO:0000255" key="1">
    <source>
        <dbReference type="HAMAP-Rule" id="MF_00090"/>
    </source>
</evidence>
<feature type="chain" id="PRO_0000351885" description="Protein-L-isoaspartate O-methyltransferase 1">
    <location>
        <begin position="1"/>
        <end position="213"/>
    </location>
</feature>
<feature type="active site" evidence="1">
    <location>
        <position position="64"/>
    </location>
</feature>
<sequence>MGMTSRRARERERLIQRLHEEGIRDPAVLKVIQETPRHIFVDEALSSRAYEDTALPIGFRQTISQPYIVARMTEALLAGGSLQKVLEVGTGSGYQTAILAGLAGLVYTVERIKPLLTQAQARFKHLGISNIRAKCADGLWGWPAYGPYQGILVAAAPREIPQTLLKQLAVGGRMVIPVGASSGTQSLMIVTRTADDFEMKTLERVSFVPLVGE</sequence>
<protein>
    <recommendedName>
        <fullName evidence="1">Protein-L-isoaspartate O-methyltransferase 1</fullName>
        <ecNumber evidence="1">2.1.1.77</ecNumber>
    </recommendedName>
    <alternativeName>
        <fullName evidence="1">L-isoaspartyl protein carboxyl methyltransferase 1</fullName>
    </alternativeName>
    <alternativeName>
        <fullName evidence="1">Protein L-isoaspartyl methyltransferase 1</fullName>
    </alternativeName>
    <alternativeName>
        <fullName evidence="1">Protein-beta-aspartate methyltransferase 1</fullName>
        <shortName evidence="1">PIMT 1</shortName>
    </alternativeName>
</protein>
<dbReference type="EC" id="2.1.1.77" evidence="1"/>
<dbReference type="EMBL" id="CP000127">
    <property type="protein sequence ID" value="ABA57303.1"/>
    <property type="molecule type" value="Genomic_DNA"/>
</dbReference>
<dbReference type="RefSeq" id="WP_002808840.1">
    <property type="nucleotide sequence ID" value="NC_007484.1"/>
</dbReference>
<dbReference type="SMR" id="Q3JCZ3"/>
<dbReference type="FunCoup" id="Q3JCZ3">
    <property type="interactions" value="426"/>
</dbReference>
<dbReference type="STRING" id="323261.Noc_0790"/>
<dbReference type="KEGG" id="noc:Noc_0790"/>
<dbReference type="eggNOG" id="COG2518">
    <property type="taxonomic scope" value="Bacteria"/>
</dbReference>
<dbReference type="HOGENOM" id="CLU_055432_2_0_6"/>
<dbReference type="InParanoid" id="Q3JCZ3"/>
<dbReference type="Proteomes" id="UP000006838">
    <property type="component" value="Chromosome"/>
</dbReference>
<dbReference type="GO" id="GO:0005737">
    <property type="term" value="C:cytoplasm"/>
    <property type="evidence" value="ECO:0007669"/>
    <property type="project" value="UniProtKB-SubCell"/>
</dbReference>
<dbReference type="GO" id="GO:0004719">
    <property type="term" value="F:protein-L-isoaspartate (D-aspartate) O-methyltransferase activity"/>
    <property type="evidence" value="ECO:0007669"/>
    <property type="project" value="UniProtKB-UniRule"/>
</dbReference>
<dbReference type="GO" id="GO:0032259">
    <property type="term" value="P:methylation"/>
    <property type="evidence" value="ECO:0007669"/>
    <property type="project" value="UniProtKB-KW"/>
</dbReference>
<dbReference type="GO" id="GO:0036211">
    <property type="term" value="P:protein modification process"/>
    <property type="evidence" value="ECO:0007669"/>
    <property type="project" value="UniProtKB-UniRule"/>
</dbReference>
<dbReference type="GO" id="GO:0030091">
    <property type="term" value="P:protein repair"/>
    <property type="evidence" value="ECO:0007669"/>
    <property type="project" value="UniProtKB-UniRule"/>
</dbReference>
<dbReference type="CDD" id="cd02440">
    <property type="entry name" value="AdoMet_MTases"/>
    <property type="match status" value="1"/>
</dbReference>
<dbReference type="FunFam" id="3.40.50.150:FF:000010">
    <property type="entry name" value="Protein-L-isoaspartate O-methyltransferase"/>
    <property type="match status" value="1"/>
</dbReference>
<dbReference type="Gene3D" id="3.40.50.150">
    <property type="entry name" value="Vaccinia Virus protein VP39"/>
    <property type="match status" value="1"/>
</dbReference>
<dbReference type="HAMAP" id="MF_00090">
    <property type="entry name" value="PIMT"/>
    <property type="match status" value="1"/>
</dbReference>
<dbReference type="InterPro" id="IPR000682">
    <property type="entry name" value="PCMT"/>
</dbReference>
<dbReference type="InterPro" id="IPR029063">
    <property type="entry name" value="SAM-dependent_MTases_sf"/>
</dbReference>
<dbReference type="NCBIfam" id="TIGR00080">
    <property type="entry name" value="pimt"/>
    <property type="match status" value="1"/>
</dbReference>
<dbReference type="NCBIfam" id="NF001453">
    <property type="entry name" value="PRK00312.1"/>
    <property type="match status" value="1"/>
</dbReference>
<dbReference type="PANTHER" id="PTHR11579">
    <property type="entry name" value="PROTEIN-L-ISOASPARTATE O-METHYLTRANSFERASE"/>
    <property type="match status" value="1"/>
</dbReference>
<dbReference type="PANTHER" id="PTHR11579:SF0">
    <property type="entry name" value="PROTEIN-L-ISOASPARTATE(D-ASPARTATE) O-METHYLTRANSFERASE"/>
    <property type="match status" value="1"/>
</dbReference>
<dbReference type="Pfam" id="PF01135">
    <property type="entry name" value="PCMT"/>
    <property type="match status" value="1"/>
</dbReference>
<dbReference type="SUPFAM" id="SSF53335">
    <property type="entry name" value="S-adenosyl-L-methionine-dependent methyltransferases"/>
    <property type="match status" value="1"/>
</dbReference>
<name>PIMT1_NITOC</name>
<reference key="1">
    <citation type="journal article" date="2006" name="Appl. Environ. Microbiol.">
        <title>Complete genome sequence of the marine, chemolithoautotrophic, ammonia-oxidizing bacterium Nitrosococcus oceani ATCC 19707.</title>
        <authorList>
            <person name="Klotz M.G."/>
            <person name="Arp D.J."/>
            <person name="Chain P.S.G."/>
            <person name="El-Sheikh A.F."/>
            <person name="Hauser L.J."/>
            <person name="Hommes N.G."/>
            <person name="Larimer F.W."/>
            <person name="Malfatti S.A."/>
            <person name="Norton J.M."/>
            <person name="Poret-Peterson A.T."/>
            <person name="Vergez L.M."/>
            <person name="Ward B.B."/>
        </authorList>
    </citation>
    <scope>NUCLEOTIDE SEQUENCE [LARGE SCALE GENOMIC DNA]</scope>
    <source>
        <strain>ATCC 19707 / BCRC 17464 / JCM 30415 / NCIMB 11848 / C-107</strain>
    </source>
</reference>